<feature type="chain" id="PRO_0000451746" description="Nus factor SuhB">
    <location>
        <begin position="1"/>
        <end position="267"/>
    </location>
</feature>
<feature type="binding site" evidence="1">
    <location>
        <position position="67"/>
    </location>
    <ligand>
        <name>Mg(2+)</name>
        <dbReference type="ChEBI" id="CHEBI:18420"/>
    </ligand>
</feature>
<feature type="binding site" evidence="1">
    <location>
        <position position="84"/>
    </location>
    <ligand>
        <name>Mg(2+)</name>
        <dbReference type="ChEBI" id="CHEBI:18420"/>
    </ligand>
</feature>
<feature type="binding site" evidence="1">
    <location>
        <position position="86"/>
    </location>
    <ligand>
        <name>Mg(2+)</name>
        <dbReference type="ChEBI" id="CHEBI:18420"/>
    </ligand>
</feature>
<organism>
    <name type="scientific">Salmonella typhimurium (strain 14028s / SGSC 2262)</name>
    <dbReference type="NCBI Taxonomy" id="588858"/>
    <lineage>
        <taxon>Bacteria</taxon>
        <taxon>Pseudomonadati</taxon>
        <taxon>Pseudomonadota</taxon>
        <taxon>Gammaproteobacteria</taxon>
        <taxon>Enterobacterales</taxon>
        <taxon>Enterobacteriaceae</taxon>
        <taxon>Salmonella</taxon>
    </lineage>
</organism>
<proteinExistence type="evidence at protein level"/>
<sequence>MHPMLTIAVRAARKAGNVIAKNYETPDAVEASQKGSNDFVTNVDKAAEAVIIDTIRKSYPQHTIITEESGEHVGTDQDVQWVIDPLDGTTNFIKRLPHFAVSIAVRIKGRTEVAVVYDPMRNELFTATRGQGAQLNGYRLRGSTARDLDGTILATGFPFKAKQYATTYINIIGKLFTECADFRRTGSAALDLAYVAAGRVDGFFEIGLRPWDFAAGELLVREAGGIVSDFTGGHNYMMTGNIVAGNPRVVKAMLANMRDELSDALKR</sequence>
<evidence type="ECO:0000250" key="1">
    <source>
        <dbReference type="UniProtKB" id="P0ADG4"/>
    </source>
</evidence>
<evidence type="ECO:0000269" key="2">
    <source>
    </source>
</evidence>
<evidence type="ECO:0000305" key="3"/>
<evidence type="ECO:0000305" key="4">
    <source>
    </source>
</evidence>
<protein>
    <recommendedName>
        <fullName evidence="1">Nus factor SuhB</fullName>
    </recommendedName>
    <alternativeName>
        <fullName>Inositol-1-monophosphatase</fullName>
        <shortName>I-1-Pase</shortName>
        <shortName>IMPase</shortName>
        <shortName>Inositol-1-phosphatase</shortName>
        <ecNumber evidence="1">3.1.3.25</ecNumber>
    </alternativeName>
</protein>
<name>SUHB_SALT1</name>
<gene>
    <name type="primary">suhB</name>
    <name type="ordered locus">STM14_3124</name>
</gene>
<accession>A0A0F6B4W4</accession>
<comment type="function">
    <text evidence="1 2">Associates with the boxA element in its own promoter (PubMed:29229908). Part of the processive rRNA transcription and antitermination complex (rrnTAC). The complex forms an RNA-chaperone ring around the RNA exit tunnel of RNA polymerase (RNAP). It supports rapid transcription and antitermination of rRNA operons, cotranscriptional rRNA folding, and annealing of distal rRNA regions to allow correct ribosome biogenesis. This subunit may play a central role in organizing the structure (By similarity).</text>
</comment>
<comment type="catalytic activity">
    <reaction evidence="1">
        <text>a myo-inositol phosphate + H2O = myo-inositol + phosphate</text>
        <dbReference type="Rhea" id="RHEA:24056"/>
        <dbReference type="ChEBI" id="CHEBI:15377"/>
        <dbReference type="ChEBI" id="CHEBI:17268"/>
        <dbReference type="ChEBI" id="CHEBI:43474"/>
        <dbReference type="ChEBI" id="CHEBI:84139"/>
        <dbReference type="EC" id="3.1.3.25"/>
    </reaction>
</comment>
<comment type="cofactor">
    <cofactor evidence="1">
        <name>Mg(2+)</name>
        <dbReference type="ChEBI" id="CHEBI:18420"/>
    </cofactor>
</comment>
<comment type="subunit">
    <text evidence="1">Homodimer. The rRNA transcription and antitermination complex (rrnTAC) consists of RNA polymerase (RNAP), NusA, NusB, NusE (rpsJ), NusG, SubB, ribosomal protein S4, DNA and precursor rRNA; S4 is more flexible than other subunits.</text>
</comment>
<comment type="subcellular location">
    <subcellularLocation>
        <location evidence="1">Cytoplasm</location>
    </subcellularLocation>
</comment>
<comment type="induction">
    <text evidence="4">Repressed by the Nus factor complex (NusA, NusB, NusE (rpsJ), NusG and SuhB).</text>
</comment>
<comment type="similarity">
    <text evidence="3">Belongs to the inositol monophosphatase superfamily.</text>
</comment>
<dbReference type="EC" id="3.1.3.25" evidence="1"/>
<dbReference type="EMBL" id="CP001363">
    <property type="protein sequence ID" value="ACY89555.1"/>
    <property type="molecule type" value="Genomic_DNA"/>
</dbReference>
<dbReference type="RefSeq" id="WP_000553467.1">
    <property type="nucleotide sequence ID" value="NZ_CP043402.1"/>
</dbReference>
<dbReference type="SMR" id="A0A0F6B4W4"/>
<dbReference type="KEGG" id="seo:STM14_3124"/>
<dbReference type="PATRIC" id="fig|588858.6.peg.2897"/>
<dbReference type="HOGENOM" id="CLU_044118_0_4_6"/>
<dbReference type="BioCyc" id="SENT588858:STM14_RS13955-MONOMER"/>
<dbReference type="Proteomes" id="UP000002695">
    <property type="component" value="Chromosome"/>
</dbReference>
<dbReference type="GO" id="GO:0005737">
    <property type="term" value="C:cytoplasm"/>
    <property type="evidence" value="ECO:0007669"/>
    <property type="project" value="UniProtKB-SubCell"/>
</dbReference>
<dbReference type="GO" id="GO:0008934">
    <property type="term" value="F:inositol monophosphate 1-phosphatase activity"/>
    <property type="evidence" value="ECO:0007669"/>
    <property type="project" value="InterPro"/>
</dbReference>
<dbReference type="GO" id="GO:0046872">
    <property type="term" value="F:metal ion binding"/>
    <property type="evidence" value="ECO:0007669"/>
    <property type="project" value="UniProtKB-KW"/>
</dbReference>
<dbReference type="GO" id="GO:0003723">
    <property type="term" value="F:RNA binding"/>
    <property type="evidence" value="ECO:0007669"/>
    <property type="project" value="UniProtKB-KW"/>
</dbReference>
<dbReference type="GO" id="GO:0006020">
    <property type="term" value="P:inositol metabolic process"/>
    <property type="evidence" value="ECO:0007669"/>
    <property type="project" value="TreeGrafter"/>
</dbReference>
<dbReference type="GO" id="GO:0046854">
    <property type="term" value="P:phosphatidylinositol phosphate biosynthetic process"/>
    <property type="evidence" value="ECO:0007669"/>
    <property type="project" value="InterPro"/>
</dbReference>
<dbReference type="GO" id="GO:0042254">
    <property type="term" value="P:ribosome biogenesis"/>
    <property type="evidence" value="ECO:0007669"/>
    <property type="project" value="UniProtKB-KW"/>
</dbReference>
<dbReference type="GO" id="GO:0007165">
    <property type="term" value="P:signal transduction"/>
    <property type="evidence" value="ECO:0007669"/>
    <property type="project" value="TreeGrafter"/>
</dbReference>
<dbReference type="GO" id="GO:0031564">
    <property type="term" value="P:transcription antitermination"/>
    <property type="evidence" value="ECO:0007669"/>
    <property type="project" value="UniProtKB-KW"/>
</dbReference>
<dbReference type="CDD" id="cd01639">
    <property type="entry name" value="IMPase"/>
    <property type="match status" value="1"/>
</dbReference>
<dbReference type="FunFam" id="3.30.540.10:FF:000003">
    <property type="entry name" value="Inositol-1-monophosphatase"/>
    <property type="match status" value="1"/>
</dbReference>
<dbReference type="FunFam" id="3.40.190.80:FF:000004">
    <property type="entry name" value="Inositol-1-monophosphatase"/>
    <property type="match status" value="1"/>
</dbReference>
<dbReference type="Gene3D" id="3.40.190.80">
    <property type="match status" value="1"/>
</dbReference>
<dbReference type="Gene3D" id="3.30.540.10">
    <property type="entry name" value="Fructose-1,6-Bisphosphatase, subunit A, domain 1"/>
    <property type="match status" value="1"/>
</dbReference>
<dbReference type="InterPro" id="IPR033942">
    <property type="entry name" value="IMPase"/>
</dbReference>
<dbReference type="InterPro" id="IPR020583">
    <property type="entry name" value="Inositol_monoP_metal-BS"/>
</dbReference>
<dbReference type="InterPro" id="IPR000760">
    <property type="entry name" value="Inositol_monophosphatase-like"/>
</dbReference>
<dbReference type="InterPro" id="IPR020550">
    <property type="entry name" value="Inositol_monophosphatase_CS"/>
</dbReference>
<dbReference type="InterPro" id="IPR022337">
    <property type="entry name" value="Inositol_monophosphatase_SuhB"/>
</dbReference>
<dbReference type="NCBIfam" id="NF008027">
    <property type="entry name" value="PRK10757.1"/>
    <property type="match status" value="1"/>
</dbReference>
<dbReference type="PANTHER" id="PTHR20854">
    <property type="entry name" value="INOSITOL MONOPHOSPHATASE"/>
    <property type="match status" value="1"/>
</dbReference>
<dbReference type="PANTHER" id="PTHR20854:SF4">
    <property type="entry name" value="INOSITOL-1-MONOPHOSPHATASE-RELATED"/>
    <property type="match status" value="1"/>
</dbReference>
<dbReference type="Pfam" id="PF00459">
    <property type="entry name" value="Inositol_P"/>
    <property type="match status" value="1"/>
</dbReference>
<dbReference type="PRINTS" id="PR00377">
    <property type="entry name" value="IMPHPHTASES"/>
</dbReference>
<dbReference type="PRINTS" id="PR01959">
    <property type="entry name" value="SBIMPHPHTASE"/>
</dbReference>
<dbReference type="SUPFAM" id="SSF56655">
    <property type="entry name" value="Carbohydrate phosphatase"/>
    <property type="match status" value="1"/>
</dbReference>
<dbReference type="PROSITE" id="PS00629">
    <property type="entry name" value="IMP_1"/>
    <property type="match status" value="1"/>
</dbReference>
<dbReference type="PROSITE" id="PS00630">
    <property type="entry name" value="IMP_2"/>
    <property type="match status" value="1"/>
</dbReference>
<keyword id="KW-0143">Chaperone</keyword>
<keyword id="KW-0963">Cytoplasm</keyword>
<keyword id="KW-0378">Hydrolase</keyword>
<keyword id="KW-0460">Magnesium</keyword>
<keyword id="KW-0479">Metal-binding</keyword>
<keyword id="KW-0690">Ribosome biogenesis</keyword>
<keyword id="KW-0694">RNA-binding</keyword>
<keyword id="KW-0804">Transcription</keyword>
<keyword id="KW-0889">Transcription antitermination</keyword>
<keyword id="KW-0805">Transcription regulation</keyword>
<reference key="1">
    <citation type="journal article" date="2010" name="J. Bacteriol.">
        <title>Short-term signatures of evolutionary change in the Salmonella enterica serovar typhimurium 14028 genome.</title>
        <authorList>
            <person name="Jarvik T."/>
            <person name="Smillie C."/>
            <person name="Groisman E.A."/>
            <person name="Ochman H."/>
        </authorList>
    </citation>
    <scope>NUCLEOTIDE SEQUENCE [LARGE SCALE GENOMIC DNA]</scope>
    <source>
        <strain>14028s / SGSC 2262</strain>
    </source>
</reference>
<reference key="2">
    <citation type="journal article" date="2017" name="Nat. Commun.">
        <title>Identification of regulatory targets for the bacterial Nus factor complex.</title>
        <authorList>
            <person name="Baniulyte G."/>
            <person name="Singh N."/>
            <person name="Benoit C."/>
            <person name="Johnson R."/>
            <person name="Ferguson R."/>
            <person name="Paramo M."/>
            <person name="Stringer A.M."/>
            <person name="Scott A."/>
            <person name="Lapierre P."/>
            <person name="Wade J.T."/>
        </authorList>
    </citation>
    <scope>FUNCTION</scope>
    <scope>SUBUNIT</scope>
    <scope>PROBABLE INDUCTION</scope>
    <source>
        <strain>14028s / SGSC 2262</strain>
    </source>
</reference>